<evidence type="ECO:0000250" key="1"/>
<evidence type="ECO:0000255" key="2"/>
<evidence type="ECO:0000256" key="3">
    <source>
        <dbReference type="SAM" id="MobiDB-lite"/>
    </source>
</evidence>
<evidence type="ECO:0000305" key="4"/>
<gene>
    <name type="primary">frg-1</name>
    <name type="ORF">ZK1010.3</name>
</gene>
<protein>
    <recommendedName>
        <fullName>Protein FRG1 homolog</fullName>
    </recommendedName>
</protein>
<proteinExistence type="inferred from homology"/>
<keyword id="KW-0009">Actin-binding</keyword>
<keyword id="KW-0963">Cytoplasm</keyword>
<keyword id="KW-0517">Myogenesis</keyword>
<keyword id="KW-0539">Nucleus</keyword>
<keyword id="KW-1185">Reference proteome</keyword>
<keyword id="KW-0690">Ribosome biogenesis</keyword>
<keyword id="KW-0694">RNA-binding</keyword>
<keyword id="KW-0698">rRNA processing</keyword>
<comment type="function">
    <text evidence="1">Binds to mRNA in a sequence-independent manner. May play a role in regulation of pre-mRNA splicing or in the assembly of rRNA into ribosomal subunits. May be involved in mRNA transport. May be involved in epigenetic regulation of muscle differentiation through regulation of activity of the histone-lysine N-methyltransferase KMT5B (By similarity).</text>
</comment>
<comment type="subcellular location">
    <subcellularLocation>
        <location evidence="1">Nucleus</location>
        <location evidence="1">Cajal body</location>
    </subcellularLocation>
    <subcellularLocation>
        <location evidence="1">Nucleus</location>
        <location evidence="1">Nucleolus</location>
    </subcellularLocation>
    <subcellularLocation>
        <location evidence="1">Cytoplasm</location>
    </subcellularLocation>
</comment>
<comment type="similarity">
    <text evidence="4">Belongs to the FRG1 family.</text>
</comment>
<reference key="1">
    <citation type="journal article" date="1998" name="Science">
        <title>Genome sequence of the nematode C. elegans: a platform for investigating biology.</title>
        <authorList>
            <consortium name="The C. elegans sequencing consortium"/>
        </authorList>
    </citation>
    <scope>NUCLEOTIDE SEQUENCE [LARGE SCALE GENOMIC DNA]</scope>
    <source>
        <strain>Bristol N2</strain>
    </source>
</reference>
<sequence length="274" mass="30268">MPGADYSAVKGGGLKLKAGKKNLFKVGKEKKKKNKDDKEKIDPDTVENGGWRKIADEFDMKGGTNVAIEVASGAGSTRTYVAAMDNGKFTIGFPHPEGEGPNPEEIFALVKTPDDSKISLKTGFGRYVGVDSEYQLVAMAEAIGSREQFVLVFQEGKTAFQAVSSPLFLSTVPNKEGHIYVASRTATENEMVNIRTDAIQEGPVDWRSVEDRKNARECETAYVKMYQHSKVDLKNRHIAIDVKDKKGVKKAQADGSAHELLLDRRMKMKSDRYC</sequence>
<accession>O18282</accession>
<name>FRG1_CAEEL</name>
<feature type="chain" id="PRO_0000220770" description="Protein FRG1 homolog">
    <location>
        <begin position="1"/>
        <end position="274"/>
    </location>
</feature>
<feature type="region of interest" description="Disordered" evidence="3">
    <location>
        <begin position="27"/>
        <end position="46"/>
    </location>
</feature>
<feature type="short sequence motif" description="Nuclear localization signal" evidence="2">
    <location>
        <begin position="20"/>
        <end position="36"/>
    </location>
</feature>
<feature type="short sequence motif" description="Bipartite nuclear localization signal" evidence="2">
    <location>
        <begin position="252"/>
        <end position="268"/>
    </location>
</feature>
<feature type="compositionally biased region" description="Basic and acidic residues" evidence="3">
    <location>
        <begin position="34"/>
        <end position="43"/>
    </location>
</feature>
<organism>
    <name type="scientific">Caenorhabditis elegans</name>
    <dbReference type="NCBI Taxonomy" id="6239"/>
    <lineage>
        <taxon>Eukaryota</taxon>
        <taxon>Metazoa</taxon>
        <taxon>Ecdysozoa</taxon>
        <taxon>Nematoda</taxon>
        <taxon>Chromadorea</taxon>
        <taxon>Rhabditida</taxon>
        <taxon>Rhabditina</taxon>
        <taxon>Rhabditomorpha</taxon>
        <taxon>Rhabditoidea</taxon>
        <taxon>Rhabditidae</taxon>
        <taxon>Peloderinae</taxon>
        <taxon>Caenorhabditis</taxon>
    </lineage>
</organism>
<dbReference type="EMBL" id="Z82083">
    <property type="protein sequence ID" value="CAB04969.2"/>
    <property type="molecule type" value="Genomic_DNA"/>
</dbReference>
<dbReference type="PIR" id="T27640">
    <property type="entry name" value="T27640"/>
</dbReference>
<dbReference type="RefSeq" id="NP_499696.2">
    <property type="nucleotide sequence ID" value="NM_067295.8"/>
</dbReference>
<dbReference type="SMR" id="O18282"/>
<dbReference type="BioGRID" id="41892">
    <property type="interactions" value="5"/>
</dbReference>
<dbReference type="DIP" id="DIP-26349N"/>
<dbReference type="FunCoup" id="O18282">
    <property type="interactions" value="2534"/>
</dbReference>
<dbReference type="STRING" id="6239.ZK1010.3.1"/>
<dbReference type="PaxDb" id="6239-ZK1010.3.2"/>
<dbReference type="PeptideAtlas" id="O18282"/>
<dbReference type="EnsemblMetazoa" id="ZK1010.3.1">
    <property type="protein sequence ID" value="ZK1010.3.1"/>
    <property type="gene ID" value="WBGene00014177"/>
</dbReference>
<dbReference type="GeneID" id="176719"/>
<dbReference type="KEGG" id="cel:CELE_ZK1010.3"/>
<dbReference type="UCSC" id="ZK1010.3">
    <property type="organism name" value="c. elegans"/>
</dbReference>
<dbReference type="AGR" id="WB:WBGene00014177"/>
<dbReference type="CTD" id="176719"/>
<dbReference type="WormBase" id="ZK1010.3">
    <property type="protein sequence ID" value="CE37862"/>
    <property type="gene ID" value="WBGene00014177"/>
    <property type="gene designation" value="frg-1"/>
</dbReference>
<dbReference type="eggNOG" id="KOG3962">
    <property type="taxonomic scope" value="Eukaryota"/>
</dbReference>
<dbReference type="GeneTree" id="ENSGT00390000004552"/>
<dbReference type="HOGENOM" id="CLU_094616_0_0_1"/>
<dbReference type="InParanoid" id="O18282"/>
<dbReference type="OMA" id="IEQWEPI"/>
<dbReference type="OrthoDB" id="5539371at2759"/>
<dbReference type="PhylomeDB" id="O18282"/>
<dbReference type="PRO" id="PR:O18282"/>
<dbReference type="Proteomes" id="UP000001940">
    <property type="component" value="Chromosome III"/>
</dbReference>
<dbReference type="Bgee" id="WBGene00014177">
    <property type="expression patterns" value="Expressed in embryo and 4 other cell types or tissues"/>
</dbReference>
<dbReference type="GO" id="GO:0015030">
    <property type="term" value="C:Cajal body"/>
    <property type="evidence" value="ECO:0007669"/>
    <property type="project" value="UniProtKB-SubCell"/>
</dbReference>
<dbReference type="GO" id="GO:0071013">
    <property type="term" value="C:catalytic step 2 spliceosome"/>
    <property type="evidence" value="ECO:0000318"/>
    <property type="project" value="GO_Central"/>
</dbReference>
<dbReference type="GO" id="GO:0005730">
    <property type="term" value="C:nucleolus"/>
    <property type="evidence" value="ECO:0000314"/>
    <property type="project" value="WormBase"/>
</dbReference>
<dbReference type="GO" id="GO:0055120">
    <property type="term" value="C:striated muscle dense body"/>
    <property type="evidence" value="ECO:0000314"/>
    <property type="project" value="WormBase"/>
</dbReference>
<dbReference type="GO" id="GO:0051015">
    <property type="term" value="F:actin filament binding"/>
    <property type="evidence" value="ECO:0000314"/>
    <property type="project" value="WormBase"/>
</dbReference>
<dbReference type="GO" id="GO:0042803">
    <property type="term" value="F:protein homodimerization activity"/>
    <property type="evidence" value="ECO:0000314"/>
    <property type="project" value="WormBase"/>
</dbReference>
<dbReference type="GO" id="GO:0003723">
    <property type="term" value="F:RNA binding"/>
    <property type="evidence" value="ECO:0007669"/>
    <property type="project" value="UniProtKB-KW"/>
</dbReference>
<dbReference type="GO" id="GO:0051017">
    <property type="term" value="P:actin filament bundle assembly"/>
    <property type="evidence" value="ECO:0000314"/>
    <property type="project" value="WormBase"/>
</dbReference>
<dbReference type="GO" id="GO:0007517">
    <property type="term" value="P:muscle organ development"/>
    <property type="evidence" value="ECO:0007669"/>
    <property type="project" value="UniProtKB-KW"/>
</dbReference>
<dbReference type="GO" id="GO:0006364">
    <property type="term" value="P:rRNA processing"/>
    <property type="evidence" value="ECO:0007669"/>
    <property type="project" value="UniProtKB-KW"/>
</dbReference>
<dbReference type="CDD" id="cd23338">
    <property type="entry name" value="beta-trefoil_FSCN_FRG1"/>
    <property type="match status" value="1"/>
</dbReference>
<dbReference type="FunFam" id="2.80.10.50:FF:000061">
    <property type="entry name" value="Protein FRG1"/>
    <property type="match status" value="1"/>
</dbReference>
<dbReference type="Gene3D" id="2.80.10.50">
    <property type="match status" value="1"/>
</dbReference>
<dbReference type="InterPro" id="IPR008999">
    <property type="entry name" value="Actin-crosslinking"/>
</dbReference>
<dbReference type="InterPro" id="IPR010414">
    <property type="entry name" value="FRG1"/>
</dbReference>
<dbReference type="PANTHER" id="PTHR12928">
    <property type="entry name" value="FRG1 PROTEIN"/>
    <property type="match status" value="1"/>
</dbReference>
<dbReference type="PANTHER" id="PTHR12928:SF0">
    <property type="entry name" value="FSHD REGION GENE 1"/>
    <property type="match status" value="1"/>
</dbReference>
<dbReference type="Pfam" id="PF06229">
    <property type="entry name" value="FRG1"/>
    <property type="match status" value="1"/>
</dbReference>
<dbReference type="SUPFAM" id="SSF50405">
    <property type="entry name" value="Actin-crosslinking proteins"/>
    <property type="match status" value="1"/>
</dbReference>